<reference key="1">
    <citation type="journal article" date="2006" name="J. Bacteriol.">
        <title>Comparative genomic evidence for a close relationship between the dimorphic prosthecate bacteria Hyphomonas neptunium and Caulobacter crescentus.</title>
        <authorList>
            <person name="Badger J.H."/>
            <person name="Hoover T.R."/>
            <person name="Brun Y.V."/>
            <person name="Weiner R.M."/>
            <person name="Laub M.T."/>
            <person name="Alexandre G."/>
            <person name="Mrazek J."/>
            <person name="Ren Q."/>
            <person name="Paulsen I.T."/>
            <person name="Nelson K.E."/>
            <person name="Khouri H.M."/>
            <person name="Radune D."/>
            <person name="Sosa J."/>
            <person name="Dodson R.J."/>
            <person name="Sullivan S.A."/>
            <person name="Rosovitz M.J."/>
            <person name="Madupu R."/>
            <person name="Brinkac L.M."/>
            <person name="Durkin A.S."/>
            <person name="Daugherty S.C."/>
            <person name="Kothari S.P."/>
            <person name="Giglio M.G."/>
            <person name="Zhou L."/>
            <person name="Haft D.H."/>
            <person name="Selengut J.D."/>
            <person name="Davidsen T.M."/>
            <person name="Yang Q."/>
            <person name="Zafar N."/>
            <person name="Ward N.L."/>
        </authorList>
    </citation>
    <scope>NUCLEOTIDE SEQUENCE [LARGE SCALE GENOMIC DNA]</scope>
    <source>
        <strain>ATCC 15444</strain>
    </source>
</reference>
<gene>
    <name evidence="1" type="primary">macB</name>
    <name type="ordered locus">HNE_1647</name>
</gene>
<protein>
    <recommendedName>
        <fullName evidence="1">Macrolide export ATP-binding/permease protein MacB</fullName>
        <ecNumber evidence="1">7.6.2.-</ecNumber>
    </recommendedName>
</protein>
<name>MACB_HYPNA</name>
<organism>
    <name type="scientific">Hyphomonas neptunium (strain ATCC 15444)</name>
    <dbReference type="NCBI Taxonomy" id="228405"/>
    <lineage>
        <taxon>Bacteria</taxon>
        <taxon>Pseudomonadati</taxon>
        <taxon>Pseudomonadota</taxon>
        <taxon>Alphaproteobacteria</taxon>
        <taxon>Hyphomonadales</taxon>
        <taxon>Hyphomonadaceae</taxon>
        <taxon>Hyphomonas</taxon>
    </lineage>
</organism>
<dbReference type="EC" id="7.6.2.-" evidence="1"/>
<dbReference type="EMBL" id="CP000158">
    <property type="protein sequence ID" value="ABI78669.1"/>
    <property type="molecule type" value="Genomic_DNA"/>
</dbReference>
<dbReference type="RefSeq" id="WP_011646655.1">
    <property type="nucleotide sequence ID" value="NC_008358.1"/>
</dbReference>
<dbReference type="SMR" id="Q0C1N8"/>
<dbReference type="STRING" id="228405.HNE_1647"/>
<dbReference type="KEGG" id="hne:HNE_1647"/>
<dbReference type="eggNOG" id="COG0577">
    <property type="taxonomic scope" value="Bacteria"/>
</dbReference>
<dbReference type="eggNOG" id="COG1136">
    <property type="taxonomic scope" value="Bacteria"/>
</dbReference>
<dbReference type="HOGENOM" id="CLU_000604_78_2_5"/>
<dbReference type="Proteomes" id="UP000001959">
    <property type="component" value="Chromosome"/>
</dbReference>
<dbReference type="GO" id="GO:0005886">
    <property type="term" value="C:plasma membrane"/>
    <property type="evidence" value="ECO:0007669"/>
    <property type="project" value="UniProtKB-SubCell"/>
</dbReference>
<dbReference type="GO" id="GO:0005524">
    <property type="term" value="F:ATP binding"/>
    <property type="evidence" value="ECO:0007669"/>
    <property type="project" value="UniProtKB-KW"/>
</dbReference>
<dbReference type="GO" id="GO:0016887">
    <property type="term" value="F:ATP hydrolysis activity"/>
    <property type="evidence" value="ECO:0007669"/>
    <property type="project" value="InterPro"/>
</dbReference>
<dbReference type="GO" id="GO:0022857">
    <property type="term" value="F:transmembrane transporter activity"/>
    <property type="evidence" value="ECO:0007669"/>
    <property type="project" value="TreeGrafter"/>
</dbReference>
<dbReference type="GO" id="GO:0046677">
    <property type="term" value="P:response to antibiotic"/>
    <property type="evidence" value="ECO:0007669"/>
    <property type="project" value="UniProtKB-KW"/>
</dbReference>
<dbReference type="CDD" id="cd03255">
    <property type="entry name" value="ABC_MJ0796_LolCDE_FtsE"/>
    <property type="match status" value="1"/>
</dbReference>
<dbReference type="FunFam" id="3.40.50.300:FF:000032">
    <property type="entry name" value="Export ABC transporter ATP-binding protein"/>
    <property type="match status" value="1"/>
</dbReference>
<dbReference type="Gene3D" id="3.40.50.300">
    <property type="entry name" value="P-loop containing nucleotide triphosphate hydrolases"/>
    <property type="match status" value="1"/>
</dbReference>
<dbReference type="InterPro" id="IPR003593">
    <property type="entry name" value="AAA+_ATPase"/>
</dbReference>
<dbReference type="InterPro" id="IPR003838">
    <property type="entry name" value="ABC3_permease_C"/>
</dbReference>
<dbReference type="InterPro" id="IPR003439">
    <property type="entry name" value="ABC_transporter-like_ATP-bd"/>
</dbReference>
<dbReference type="InterPro" id="IPR017871">
    <property type="entry name" value="ABC_transporter-like_CS"/>
</dbReference>
<dbReference type="InterPro" id="IPR017911">
    <property type="entry name" value="MacB-like_ATP-bd"/>
</dbReference>
<dbReference type="InterPro" id="IPR025857">
    <property type="entry name" value="MacB_PCD"/>
</dbReference>
<dbReference type="InterPro" id="IPR050250">
    <property type="entry name" value="Macrolide_Exporter_MacB"/>
</dbReference>
<dbReference type="InterPro" id="IPR027417">
    <property type="entry name" value="P-loop_NTPase"/>
</dbReference>
<dbReference type="PANTHER" id="PTHR30572:SF4">
    <property type="entry name" value="ABC TRANSPORTER PERMEASE YTRF"/>
    <property type="match status" value="1"/>
</dbReference>
<dbReference type="PANTHER" id="PTHR30572">
    <property type="entry name" value="MEMBRANE COMPONENT OF TRANSPORTER-RELATED"/>
    <property type="match status" value="1"/>
</dbReference>
<dbReference type="Pfam" id="PF00005">
    <property type="entry name" value="ABC_tran"/>
    <property type="match status" value="1"/>
</dbReference>
<dbReference type="Pfam" id="PF02687">
    <property type="entry name" value="FtsX"/>
    <property type="match status" value="1"/>
</dbReference>
<dbReference type="Pfam" id="PF12704">
    <property type="entry name" value="MacB_PCD"/>
    <property type="match status" value="1"/>
</dbReference>
<dbReference type="SMART" id="SM00382">
    <property type="entry name" value="AAA"/>
    <property type="match status" value="1"/>
</dbReference>
<dbReference type="SUPFAM" id="SSF52540">
    <property type="entry name" value="P-loop containing nucleoside triphosphate hydrolases"/>
    <property type="match status" value="1"/>
</dbReference>
<dbReference type="PROSITE" id="PS00211">
    <property type="entry name" value="ABC_TRANSPORTER_1"/>
    <property type="match status" value="1"/>
</dbReference>
<dbReference type="PROSITE" id="PS50893">
    <property type="entry name" value="ABC_TRANSPORTER_2"/>
    <property type="match status" value="1"/>
</dbReference>
<dbReference type="PROSITE" id="PS51267">
    <property type="entry name" value="MACB"/>
    <property type="match status" value="1"/>
</dbReference>
<proteinExistence type="inferred from homology"/>
<keyword id="KW-0046">Antibiotic resistance</keyword>
<keyword id="KW-0067">ATP-binding</keyword>
<keyword id="KW-0997">Cell inner membrane</keyword>
<keyword id="KW-1003">Cell membrane</keyword>
<keyword id="KW-0472">Membrane</keyword>
<keyword id="KW-0547">Nucleotide-binding</keyword>
<keyword id="KW-1185">Reference proteome</keyword>
<keyword id="KW-1278">Translocase</keyword>
<keyword id="KW-0812">Transmembrane</keyword>
<keyword id="KW-1133">Transmembrane helix</keyword>
<keyword id="KW-0813">Transport</keyword>
<comment type="function">
    <text evidence="1">Non-canonical ABC transporter that contains transmembrane domains (TMD), which form a pore in the inner membrane, and an ATP-binding domain (NBD), which is responsible for energy generation. Confers resistance against macrolides.</text>
</comment>
<comment type="subunit">
    <text evidence="1">Homodimer.</text>
</comment>
<comment type="subcellular location">
    <subcellularLocation>
        <location evidence="1">Cell inner membrane</location>
        <topology evidence="1">Multi-pass membrane protein</topology>
    </subcellularLocation>
</comment>
<comment type="similarity">
    <text evidence="1">Belongs to the ABC transporter superfamily. Macrolide exporter (TC 3.A.1.122) family.</text>
</comment>
<sequence>MTPPLIELKDVTRYYGSGDTEVRALDGVSLTIETGEFVAIVGQSGSGKSTLMNLLGCLDRPTNGRYAIRGQNVSELDPDNLAALRRETFGFIFQRYNLLASVSASENVEIPAVYAGLALSERREKAAGLLAKLGLGERVHHKPGQLSGGQQQRVAVARALVNDAEVILADEPTGALDSGSSNDLLNLLEELHASGRTIILITHDQKVAARAKRVIEIRDGKIISDSGNKQAAAEEAPQYRYARKGPSPIAQVAESVKMAFRSLRANLFRTALTLLGVVIGVSAVVAMLAIGEGSRAEVMARFESMGPNLLFVRPGAPGTRMRGGAIATLTLEDAQALGELENILAAVPSRSTNATLRNGGNDYSSSIEGVSETWPIAQNRDMLYGTFFTKDDVDRRIGAVVLGTTTAGNLFDDIESAVGQYVFLGGAPFEVAGILESKGASSWGQDQDDIALVPITTGMMRLFGQSYLSSITLAVDDTDRITETEAAAHAFLLARHGTEDFQIRNTASILASVEETQNSFSILLGSVAAISLLVGGIGVMNIMLVSVSERTREIGVRMATGARRSDIQTQFIVESLVVGGLGGIAGVAIGFGIVFIIAQMGMTVAVTPLPAILAFSSALGTGLVFGLLPARQASRLDPVAALASE</sequence>
<evidence type="ECO:0000255" key="1">
    <source>
        <dbReference type="HAMAP-Rule" id="MF_01720"/>
    </source>
</evidence>
<accession>Q0C1N8</accession>
<feature type="chain" id="PRO_0000269945" description="Macrolide export ATP-binding/permease protein MacB">
    <location>
        <begin position="1"/>
        <end position="645"/>
    </location>
</feature>
<feature type="transmembrane region" description="Helical" evidence="1">
    <location>
        <begin position="271"/>
        <end position="291"/>
    </location>
</feature>
<feature type="transmembrane region" description="Helical" evidence="1">
    <location>
        <begin position="520"/>
        <end position="540"/>
    </location>
</feature>
<feature type="transmembrane region" description="Helical" evidence="1">
    <location>
        <begin position="577"/>
        <end position="597"/>
    </location>
</feature>
<feature type="transmembrane region" description="Helical" evidence="1">
    <location>
        <begin position="608"/>
        <end position="628"/>
    </location>
</feature>
<feature type="domain" description="ABC transporter" evidence="1">
    <location>
        <begin position="6"/>
        <end position="244"/>
    </location>
</feature>
<feature type="binding site" evidence="1">
    <location>
        <begin position="42"/>
        <end position="49"/>
    </location>
    <ligand>
        <name>ATP</name>
        <dbReference type="ChEBI" id="CHEBI:30616"/>
    </ligand>
</feature>